<evidence type="ECO:0000250" key="1"/>
<evidence type="ECO:0000250" key="2">
    <source>
        <dbReference type="UniProtKB" id="P18634"/>
    </source>
</evidence>
<evidence type="ECO:0000305" key="3"/>
<keyword id="KW-0963">Cytoplasm</keyword>
<keyword id="KW-0254">Endocytosis</keyword>
<keyword id="KW-1017">Isopeptide bond</keyword>
<keyword id="KW-0832">Ubl conjugation</keyword>
<reference key="1">
    <citation type="submission" date="2005-03" db="EMBL/GenBank/DDBJ databases">
        <title>Annotation of the Saccharomyces cerevisiae RM11-1a genome.</title>
        <authorList>
            <consortium name="The Broad Institute Genome Sequencing Platform"/>
            <person name="Birren B.W."/>
            <person name="Lander E.S."/>
            <person name="Galagan J.E."/>
            <person name="Nusbaum C."/>
            <person name="Devon K."/>
            <person name="Cuomo C."/>
            <person name="Jaffe D.B."/>
            <person name="Butler J."/>
            <person name="Alvarez P."/>
            <person name="Gnerre S."/>
            <person name="Grabherr M."/>
            <person name="Kleber M."/>
            <person name="Mauceli E.W."/>
            <person name="Brockman W."/>
            <person name="MacCallum I.A."/>
            <person name="Rounsley S."/>
            <person name="Young S.K."/>
            <person name="LaButti K."/>
            <person name="Pushparaj V."/>
            <person name="DeCaprio D."/>
            <person name="Crawford M."/>
            <person name="Koehrsen M."/>
            <person name="Engels R."/>
            <person name="Montgomery P."/>
            <person name="Pearson M."/>
            <person name="Howarth C."/>
            <person name="Larson L."/>
            <person name="Luoma S."/>
            <person name="White J."/>
            <person name="O'Leary S."/>
            <person name="Kodira C.D."/>
            <person name="Zeng Q."/>
            <person name="Yandava C."/>
            <person name="Alvarado L."/>
            <person name="Pratt S."/>
            <person name="Kruglyak L."/>
        </authorList>
    </citation>
    <scope>NUCLEOTIDE SEQUENCE [LARGE SCALE GENOMIC DNA]</scope>
    <source>
        <strain>RM11-1a</strain>
    </source>
</reference>
<accession>B3RHQ7</accession>
<organism>
    <name type="scientific">Saccharomyces cerevisiae (strain RM11-1a)</name>
    <name type="common">Baker's yeast</name>
    <dbReference type="NCBI Taxonomy" id="285006"/>
    <lineage>
        <taxon>Eukaryota</taxon>
        <taxon>Fungi</taxon>
        <taxon>Dikarya</taxon>
        <taxon>Ascomycota</taxon>
        <taxon>Saccharomycotina</taxon>
        <taxon>Saccharomycetes</taxon>
        <taxon>Saccharomycetales</taxon>
        <taxon>Saccharomycetaceae</taxon>
        <taxon>Saccharomyces</taxon>
    </lineage>
</organism>
<dbReference type="EMBL" id="DS981519">
    <property type="protein sequence ID" value="EDV08701.1"/>
    <property type="molecule type" value="Genomic_DNA"/>
</dbReference>
<dbReference type="HOGENOM" id="CLU_540776_0_0_1"/>
<dbReference type="OrthoDB" id="4352at4893"/>
<dbReference type="Proteomes" id="UP000008335">
    <property type="component" value="Unassembled WGS sequence"/>
</dbReference>
<dbReference type="GO" id="GO:0005737">
    <property type="term" value="C:cytoplasm"/>
    <property type="evidence" value="ECO:0007669"/>
    <property type="project" value="UniProtKB-SubCell"/>
</dbReference>
<dbReference type="GO" id="GO:0006897">
    <property type="term" value="P:endocytosis"/>
    <property type="evidence" value="ECO:0007669"/>
    <property type="project" value="UniProtKB-KW"/>
</dbReference>
<dbReference type="CDD" id="cd22952">
    <property type="entry name" value="ART10-like"/>
    <property type="match status" value="1"/>
</dbReference>
<dbReference type="FunFam" id="2.60.40.640:FF:000038">
    <property type="entry name" value="Arrestin-related trafficking adapter 10"/>
    <property type="match status" value="1"/>
</dbReference>
<dbReference type="Gene3D" id="2.60.40.640">
    <property type="match status" value="1"/>
</dbReference>
<dbReference type="InterPro" id="IPR014752">
    <property type="entry name" value="Arrestin-like_C"/>
</dbReference>
<comment type="function">
    <text evidence="1">May regulate endocytosis by recruiting RSP5 ubiquitin ligase activity to specific plasma membrane proteins in response to extracellular stimuli.</text>
</comment>
<comment type="subunit">
    <text evidence="1">Interacts with RSP5.</text>
</comment>
<comment type="subcellular location">
    <subcellularLocation>
        <location evidence="1">Cytoplasm</location>
    </subcellularLocation>
</comment>
<comment type="PTM">
    <text evidence="1">Ubiquitinated by RSP5.</text>
</comment>
<comment type="similarity">
    <text evidence="3">Belongs to the ART10 family.</text>
</comment>
<feature type="chain" id="PRO_0000402197" description="Arrestin-related trafficking adapter 10">
    <location>
        <begin position="1"/>
        <end position="518"/>
    </location>
</feature>
<feature type="cross-link" description="Glycyl lysine isopeptide (Lys-Gly) (interchain with G-Cter in ubiquitin)" evidence="2">
    <location>
        <position position="118"/>
    </location>
</feature>
<protein>
    <recommendedName>
        <fullName>Arrestin-related trafficking adapter 10</fullName>
    </recommendedName>
</protein>
<gene>
    <name type="primary">ART10</name>
    <name type="ORF">SCRG_04332</name>
</gene>
<proteinExistence type="inferred from homology"/>
<sequence>MAPKISISLNPPYNGEFYSSNDQMSGIVSLQLTKALSIRKISVILKGFSETLTKIDQEYMFQQNGMMMPGQDNKSFHTLMKFEQRVFPPDNVWNALDGSSKPFKVKPGSYNYSFQFDKFPRKPECLKNHTAKTVAFVTRNNARLPPTFNSHWQEFNKIDNLDLYFYSFGKVIYMVQVQIELGKSSSWFKPFHKLIREIETFEFIPEPKDLIVEPDEDDNEELNAFSNNSRGNSLVTNNEFFNSSNLKVPSKDVKVVNGVGYIKSDRNFSQANSILIENGDIRSRPVSSVTSTRQSTRLVNGMKVFPSTYKMGLPDGESNMRIEVRSRDLKQIYRKDYLFRSGSQNFDKVYVVMEGNIASLSKMQITPLKLQLNLLETTTYLSQGIANGNYSSLKLIEIDLNQLKSNKPLLDLNEIRENFDGSMFECELRLKDHPILRKLVFNEEDYRHRGNRLYSFKTCTIKRIFSLQLLIEWGINGIRKQSEVNIDPVQIFCQVREHVEAEALPRYVPPPTYTEMAS</sequence>
<name>ART10_YEAS1</name>